<reference key="1">
    <citation type="journal article" date="2007" name="PLoS Genet.">
        <title>A tale of two oxidation states: bacterial colonization of arsenic-rich environments.</title>
        <authorList>
            <person name="Muller D."/>
            <person name="Medigue C."/>
            <person name="Koechler S."/>
            <person name="Barbe V."/>
            <person name="Barakat M."/>
            <person name="Talla E."/>
            <person name="Bonnefoy V."/>
            <person name="Krin E."/>
            <person name="Arsene-Ploetze F."/>
            <person name="Carapito C."/>
            <person name="Chandler M."/>
            <person name="Cournoyer B."/>
            <person name="Cruveiller S."/>
            <person name="Dossat C."/>
            <person name="Duval S."/>
            <person name="Heymann M."/>
            <person name="Leize E."/>
            <person name="Lieutaud A."/>
            <person name="Lievremont D."/>
            <person name="Makita Y."/>
            <person name="Mangenot S."/>
            <person name="Nitschke W."/>
            <person name="Ortet P."/>
            <person name="Perdrial N."/>
            <person name="Schoepp B."/>
            <person name="Siguier P."/>
            <person name="Simeonova D.D."/>
            <person name="Rouy Z."/>
            <person name="Segurens B."/>
            <person name="Turlin E."/>
            <person name="Vallenet D."/>
            <person name="van Dorsselaer A."/>
            <person name="Weiss S."/>
            <person name="Weissenbach J."/>
            <person name="Lett M.-C."/>
            <person name="Danchin A."/>
            <person name="Bertin P.N."/>
        </authorList>
    </citation>
    <scope>NUCLEOTIDE SEQUENCE [LARGE SCALE GENOMIC DNA]</scope>
    <source>
        <strain>ULPAs1</strain>
    </source>
</reference>
<comment type="function">
    <text evidence="1">Succinyl-CoA synthetase functions in the citric acid cycle (TCA), coupling the hydrolysis of succinyl-CoA to the synthesis of either ATP or GTP and thus represents the only step of substrate-level phosphorylation in the TCA. The beta subunit provides nucleotide specificity of the enzyme and binds the substrate succinate, while the binding sites for coenzyme A and phosphate are found in the alpha subunit.</text>
</comment>
<comment type="catalytic activity">
    <reaction evidence="1">
        <text>succinate + ATP + CoA = succinyl-CoA + ADP + phosphate</text>
        <dbReference type="Rhea" id="RHEA:17661"/>
        <dbReference type="ChEBI" id="CHEBI:30031"/>
        <dbReference type="ChEBI" id="CHEBI:30616"/>
        <dbReference type="ChEBI" id="CHEBI:43474"/>
        <dbReference type="ChEBI" id="CHEBI:57287"/>
        <dbReference type="ChEBI" id="CHEBI:57292"/>
        <dbReference type="ChEBI" id="CHEBI:456216"/>
        <dbReference type="EC" id="6.2.1.5"/>
    </reaction>
    <physiologicalReaction direction="right-to-left" evidence="1">
        <dbReference type="Rhea" id="RHEA:17663"/>
    </physiologicalReaction>
</comment>
<comment type="catalytic activity">
    <reaction evidence="1">
        <text>GTP + succinate + CoA = succinyl-CoA + GDP + phosphate</text>
        <dbReference type="Rhea" id="RHEA:22120"/>
        <dbReference type="ChEBI" id="CHEBI:30031"/>
        <dbReference type="ChEBI" id="CHEBI:37565"/>
        <dbReference type="ChEBI" id="CHEBI:43474"/>
        <dbReference type="ChEBI" id="CHEBI:57287"/>
        <dbReference type="ChEBI" id="CHEBI:57292"/>
        <dbReference type="ChEBI" id="CHEBI:58189"/>
    </reaction>
    <physiologicalReaction direction="right-to-left" evidence="1">
        <dbReference type="Rhea" id="RHEA:22122"/>
    </physiologicalReaction>
</comment>
<comment type="cofactor">
    <cofactor evidence="1">
        <name>Mg(2+)</name>
        <dbReference type="ChEBI" id="CHEBI:18420"/>
    </cofactor>
    <text evidence="1">Binds 1 Mg(2+) ion per subunit.</text>
</comment>
<comment type="pathway">
    <text evidence="1">Carbohydrate metabolism; tricarboxylic acid cycle; succinate from succinyl-CoA (ligase route): step 1/1.</text>
</comment>
<comment type="subunit">
    <text evidence="1">Heterotetramer of two alpha and two beta subunits.</text>
</comment>
<comment type="similarity">
    <text evidence="1">Belongs to the succinate/malate CoA ligase beta subunit family.</text>
</comment>
<sequence length="388" mass="41649">MNIHEYQGKEILRKYGVTTPKGFPCFSVDEAVQAAEKLGGKVWVVKAQIHAGGRGKGGGVKVAKSLDEVRKYANDILGMTLVTHQTGPEGRLVKRLLIEEGADIKKELYVGMVVDRGSQRVALMASSEGGMDIEHVAEHTPEKIHKVFIDPFKGLLDSEADDIARKIGVPEGSIPQARAFMQGLYKAFDETDASLAEINPLIVTGDDRIVALDAKFNFDSNALYRHPEIVEMRDLDEEDPAEIEASKFDLTYISLDGNIGCLVNGAGLAMATMDVIKLYGGSPANFLDVGGGATTEKVTEAFKIMLKNPDIKAILVNIFGGIMKCDVIAQGVIAAAKQVDLTVPLVVRMAGTNEELGKKILAESGLPIITANNMAEAAEKVVNAAQGK</sequence>
<accession>A4G230</accession>
<gene>
    <name evidence="1" type="primary">sucC</name>
    <name type="ordered locus">HEAR0343</name>
</gene>
<feature type="chain" id="PRO_1000082105" description="Succinate--CoA ligase [ADP-forming] subunit beta">
    <location>
        <begin position="1"/>
        <end position="388"/>
    </location>
</feature>
<feature type="domain" description="ATP-grasp" evidence="1">
    <location>
        <begin position="9"/>
        <end position="244"/>
    </location>
</feature>
<feature type="binding site" evidence="1">
    <location>
        <position position="46"/>
    </location>
    <ligand>
        <name>ATP</name>
        <dbReference type="ChEBI" id="CHEBI:30616"/>
    </ligand>
</feature>
<feature type="binding site" evidence="1">
    <location>
        <begin position="53"/>
        <end position="55"/>
    </location>
    <ligand>
        <name>ATP</name>
        <dbReference type="ChEBI" id="CHEBI:30616"/>
    </ligand>
</feature>
<feature type="binding site" evidence="1">
    <location>
        <position position="99"/>
    </location>
    <ligand>
        <name>ATP</name>
        <dbReference type="ChEBI" id="CHEBI:30616"/>
    </ligand>
</feature>
<feature type="binding site" evidence="1">
    <location>
        <position position="102"/>
    </location>
    <ligand>
        <name>ATP</name>
        <dbReference type="ChEBI" id="CHEBI:30616"/>
    </ligand>
</feature>
<feature type="binding site" evidence="1">
    <location>
        <position position="107"/>
    </location>
    <ligand>
        <name>ATP</name>
        <dbReference type="ChEBI" id="CHEBI:30616"/>
    </ligand>
</feature>
<feature type="binding site" evidence="1">
    <location>
        <position position="199"/>
    </location>
    <ligand>
        <name>Mg(2+)</name>
        <dbReference type="ChEBI" id="CHEBI:18420"/>
    </ligand>
</feature>
<feature type="binding site" evidence="1">
    <location>
        <position position="213"/>
    </location>
    <ligand>
        <name>Mg(2+)</name>
        <dbReference type="ChEBI" id="CHEBI:18420"/>
    </ligand>
</feature>
<feature type="binding site" evidence="1">
    <location>
        <position position="264"/>
    </location>
    <ligand>
        <name>substrate</name>
        <note>ligand shared with subunit alpha</note>
    </ligand>
</feature>
<feature type="binding site" evidence="1">
    <location>
        <begin position="321"/>
        <end position="323"/>
    </location>
    <ligand>
        <name>substrate</name>
        <note>ligand shared with subunit alpha</note>
    </ligand>
</feature>
<protein>
    <recommendedName>
        <fullName evidence="1">Succinate--CoA ligase [ADP-forming] subunit beta</fullName>
        <ecNumber evidence="1">6.2.1.5</ecNumber>
    </recommendedName>
    <alternativeName>
        <fullName evidence="1">Succinyl-CoA synthetase subunit beta</fullName>
        <shortName evidence="1">SCS-beta</shortName>
    </alternativeName>
</protein>
<organism>
    <name type="scientific">Herminiimonas arsenicoxydans</name>
    <dbReference type="NCBI Taxonomy" id="204773"/>
    <lineage>
        <taxon>Bacteria</taxon>
        <taxon>Pseudomonadati</taxon>
        <taxon>Pseudomonadota</taxon>
        <taxon>Betaproteobacteria</taxon>
        <taxon>Burkholderiales</taxon>
        <taxon>Oxalobacteraceae</taxon>
        <taxon>Herminiimonas</taxon>
    </lineage>
</organism>
<keyword id="KW-0067">ATP-binding</keyword>
<keyword id="KW-0436">Ligase</keyword>
<keyword id="KW-0460">Magnesium</keyword>
<keyword id="KW-0479">Metal-binding</keyword>
<keyword id="KW-0547">Nucleotide-binding</keyword>
<keyword id="KW-1185">Reference proteome</keyword>
<keyword id="KW-0816">Tricarboxylic acid cycle</keyword>
<dbReference type="EC" id="6.2.1.5" evidence="1"/>
<dbReference type="EMBL" id="CU207211">
    <property type="protein sequence ID" value="CAL60567.1"/>
    <property type="molecule type" value="Genomic_DNA"/>
</dbReference>
<dbReference type="SMR" id="A4G230"/>
<dbReference type="STRING" id="204773.HEAR0343"/>
<dbReference type="KEGG" id="har:HEAR0343"/>
<dbReference type="eggNOG" id="COG0045">
    <property type="taxonomic scope" value="Bacteria"/>
</dbReference>
<dbReference type="HOGENOM" id="CLU_037430_0_2_4"/>
<dbReference type="OrthoDB" id="9802602at2"/>
<dbReference type="UniPathway" id="UPA00223">
    <property type="reaction ID" value="UER00999"/>
</dbReference>
<dbReference type="Proteomes" id="UP000006697">
    <property type="component" value="Chromosome"/>
</dbReference>
<dbReference type="GO" id="GO:0005829">
    <property type="term" value="C:cytosol"/>
    <property type="evidence" value="ECO:0007669"/>
    <property type="project" value="TreeGrafter"/>
</dbReference>
<dbReference type="GO" id="GO:0042709">
    <property type="term" value="C:succinate-CoA ligase complex"/>
    <property type="evidence" value="ECO:0007669"/>
    <property type="project" value="TreeGrafter"/>
</dbReference>
<dbReference type="GO" id="GO:0005524">
    <property type="term" value="F:ATP binding"/>
    <property type="evidence" value="ECO:0007669"/>
    <property type="project" value="UniProtKB-UniRule"/>
</dbReference>
<dbReference type="GO" id="GO:0000287">
    <property type="term" value="F:magnesium ion binding"/>
    <property type="evidence" value="ECO:0007669"/>
    <property type="project" value="UniProtKB-UniRule"/>
</dbReference>
<dbReference type="GO" id="GO:0004775">
    <property type="term" value="F:succinate-CoA ligase (ADP-forming) activity"/>
    <property type="evidence" value="ECO:0007669"/>
    <property type="project" value="UniProtKB-UniRule"/>
</dbReference>
<dbReference type="GO" id="GO:0004776">
    <property type="term" value="F:succinate-CoA ligase (GDP-forming) activity"/>
    <property type="evidence" value="ECO:0007669"/>
    <property type="project" value="RHEA"/>
</dbReference>
<dbReference type="GO" id="GO:0006104">
    <property type="term" value="P:succinyl-CoA metabolic process"/>
    <property type="evidence" value="ECO:0007669"/>
    <property type="project" value="TreeGrafter"/>
</dbReference>
<dbReference type="GO" id="GO:0006099">
    <property type="term" value="P:tricarboxylic acid cycle"/>
    <property type="evidence" value="ECO:0007669"/>
    <property type="project" value="UniProtKB-UniRule"/>
</dbReference>
<dbReference type="FunFam" id="3.30.1490.20:FF:000002">
    <property type="entry name" value="Succinate--CoA ligase [ADP-forming] subunit beta"/>
    <property type="match status" value="1"/>
</dbReference>
<dbReference type="FunFam" id="3.30.470.20:FF:000002">
    <property type="entry name" value="Succinate--CoA ligase [ADP-forming] subunit beta"/>
    <property type="match status" value="1"/>
</dbReference>
<dbReference type="FunFam" id="3.40.50.261:FF:000001">
    <property type="entry name" value="Succinate--CoA ligase [ADP-forming] subunit beta"/>
    <property type="match status" value="1"/>
</dbReference>
<dbReference type="Gene3D" id="3.30.1490.20">
    <property type="entry name" value="ATP-grasp fold, A domain"/>
    <property type="match status" value="1"/>
</dbReference>
<dbReference type="Gene3D" id="3.30.470.20">
    <property type="entry name" value="ATP-grasp fold, B domain"/>
    <property type="match status" value="1"/>
</dbReference>
<dbReference type="Gene3D" id="3.40.50.261">
    <property type="entry name" value="Succinyl-CoA synthetase domains"/>
    <property type="match status" value="1"/>
</dbReference>
<dbReference type="HAMAP" id="MF_00558">
    <property type="entry name" value="Succ_CoA_beta"/>
    <property type="match status" value="1"/>
</dbReference>
<dbReference type="InterPro" id="IPR011761">
    <property type="entry name" value="ATP-grasp"/>
</dbReference>
<dbReference type="InterPro" id="IPR013650">
    <property type="entry name" value="ATP-grasp_succ-CoA_synth-type"/>
</dbReference>
<dbReference type="InterPro" id="IPR013815">
    <property type="entry name" value="ATP_grasp_subdomain_1"/>
</dbReference>
<dbReference type="InterPro" id="IPR017866">
    <property type="entry name" value="Succ-CoA_synthase_bsu_CS"/>
</dbReference>
<dbReference type="InterPro" id="IPR005811">
    <property type="entry name" value="SUCC_ACL_C"/>
</dbReference>
<dbReference type="InterPro" id="IPR005809">
    <property type="entry name" value="Succ_CoA_ligase-like_bsu"/>
</dbReference>
<dbReference type="InterPro" id="IPR016102">
    <property type="entry name" value="Succinyl-CoA_synth-like"/>
</dbReference>
<dbReference type="NCBIfam" id="NF001913">
    <property type="entry name" value="PRK00696.1"/>
    <property type="match status" value="1"/>
</dbReference>
<dbReference type="NCBIfam" id="TIGR01016">
    <property type="entry name" value="sucCoAbeta"/>
    <property type="match status" value="1"/>
</dbReference>
<dbReference type="PANTHER" id="PTHR11815:SF10">
    <property type="entry name" value="SUCCINATE--COA LIGASE [GDP-FORMING] SUBUNIT BETA, MITOCHONDRIAL"/>
    <property type="match status" value="1"/>
</dbReference>
<dbReference type="PANTHER" id="PTHR11815">
    <property type="entry name" value="SUCCINYL-COA SYNTHETASE BETA CHAIN"/>
    <property type="match status" value="1"/>
</dbReference>
<dbReference type="Pfam" id="PF08442">
    <property type="entry name" value="ATP-grasp_2"/>
    <property type="match status" value="1"/>
</dbReference>
<dbReference type="Pfam" id="PF00549">
    <property type="entry name" value="Ligase_CoA"/>
    <property type="match status" value="1"/>
</dbReference>
<dbReference type="PIRSF" id="PIRSF001554">
    <property type="entry name" value="SucCS_beta"/>
    <property type="match status" value="1"/>
</dbReference>
<dbReference type="SUPFAM" id="SSF56059">
    <property type="entry name" value="Glutathione synthetase ATP-binding domain-like"/>
    <property type="match status" value="1"/>
</dbReference>
<dbReference type="SUPFAM" id="SSF52210">
    <property type="entry name" value="Succinyl-CoA synthetase domains"/>
    <property type="match status" value="1"/>
</dbReference>
<dbReference type="PROSITE" id="PS50975">
    <property type="entry name" value="ATP_GRASP"/>
    <property type="match status" value="1"/>
</dbReference>
<dbReference type="PROSITE" id="PS01217">
    <property type="entry name" value="SUCCINYL_COA_LIG_3"/>
    <property type="match status" value="1"/>
</dbReference>
<evidence type="ECO:0000255" key="1">
    <source>
        <dbReference type="HAMAP-Rule" id="MF_00558"/>
    </source>
</evidence>
<proteinExistence type="inferred from homology"/>
<name>SUCC_HERAR</name>